<proteinExistence type="inferred from homology"/>
<dbReference type="EC" id="6.1.1.3" evidence="1"/>
<dbReference type="EMBL" id="CP000140">
    <property type="protein sequence ID" value="ABR42436.1"/>
    <property type="molecule type" value="Genomic_DNA"/>
</dbReference>
<dbReference type="RefSeq" id="WP_009017253.1">
    <property type="nucleotide sequence ID" value="NC_009615.1"/>
</dbReference>
<dbReference type="SMR" id="A6L9S2"/>
<dbReference type="STRING" id="435591.BDI_0660"/>
<dbReference type="PaxDb" id="435591-BDI_0660"/>
<dbReference type="KEGG" id="pdi:BDI_0660"/>
<dbReference type="eggNOG" id="COG0441">
    <property type="taxonomic scope" value="Bacteria"/>
</dbReference>
<dbReference type="HOGENOM" id="CLU_008554_0_1_10"/>
<dbReference type="BioCyc" id="PDIS435591:G1G5A-677-MONOMER"/>
<dbReference type="Proteomes" id="UP000000566">
    <property type="component" value="Chromosome"/>
</dbReference>
<dbReference type="GO" id="GO:0005737">
    <property type="term" value="C:cytoplasm"/>
    <property type="evidence" value="ECO:0007669"/>
    <property type="project" value="UniProtKB-SubCell"/>
</dbReference>
<dbReference type="GO" id="GO:0005524">
    <property type="term" value="F:ATP binding"/>
    <property type="evidence" value="ECO:0007669"/>
    <property type="project" value="UniProtKB-UniRule"/>
</dbReference>
<dbReference type="GO" id="GO:0046872">
    <property type="term" value="F:metal ion binding"/>
    <property type="evidence" value="ECO:0007669"/>
    <property type="project" value="UniProtKB-KW"/>
</dbReference>
<dbReference type="GO" id="GO:0004829">
    <property type="term" value="F:threonine-tRNA ligase activity"/>
    <property type="evidence" value="ECO:0007669"/>
    <property type="project" value="UniProtKB-UniRule"/>
</dbReference>
<dbReference type="GO" id="GO:0000049">
    <property type="term" value="F:tRNA binding"/>
    <property type="evidence" value="ECO:0007669"/>
    <property type="project" value="UniProtKB-KW"/>
</dbReference>
<dbReference type="GO" id="GO:0006435">
    <property type="term" value="P:threonyl-tRNA aminoacylation"/>
    <property type="evidence" value="ECO:0007669"/>
    <property type="project" value="UniProtKB-UniRule"/>
</dbReference>
<dbReference type="CDD" id="cd01667">
    <property type="entry name" value="TGS_ThrRS"/>
    <property type="match status" value="1"/>
</dbReference>
<dbReference type="CDD" id="cd00860">
    <property type="entry name" value="ThrRS_anticodon"/>
    <property type="match status" value="1"/>
</dbReference>
<dbReference type="CDD" id="cd00771">
    <property type="entry name" value="ThrRS_core"/>
    <property type="match status" value="1"/>
</dbReference>
<dbReference type="FunFam" id="3.10.20.30:FF:000005">
    <property type="entry name" value="Threonine--tRNA ligase"/>
    <property type="match status" value="1"/>
</dbReference>
<dbReference type="FunFam" id="3.30.54.20:FF:000002">
    <property type="entry name" value="Threonine--tRNA ligase"/>
    <property type="match status" value="1"/>
</dbReference>
<dbReference type="FunFam" id="3.30.930.10:FF:000002">
    <property type="entry name" value="Threonine--tRNA ligase"/>
    <property type="match status" value="1"/>
</dbReference>
<dbReference type="FunFam" id="3.40.50.800:FF:000001">
    <property type="entry name" value="Threonine--tRNA ligase"/>
    <property type="match status" value="1"/>
</dbReference>
<dbReference type="FunFam" id="3.30.980.10:FF:000005">
    <property type="entry name" value="Threonyl-tRNA synthetase, mitochondrial"/>
    <property type="match status" value="1"/>
</dbReference>
<dbReference type="Gene3D" id="3.10.20.30">
    <property type="match status" value="1"/>
</dbReference>
<dbReference type="Gene3D" id="3.30.54.20">
    <property type="match status" value="1"/>
</dbReference>
<dbReference type="Gene3D" id="3.40.50.800">
    <property type="entry name" value="Anticodon-binding domain"/>
    <property type="match status" value="1"/>
</dbReference>
<dbReference type="Gene3D" id="3.30.930.10">
    <property type="entry name" value="Bira Bifunctional Protein, Domain 2"/>
    <property type="match status" value="1"/>
</dbReference>
<dbReference type="Gene3D" id="3.30.980.10">
    <property type="entry name" value="Threonyl-trna Synthetase, Chain A, domain 2"/>
    <property type="match status" value="1"/>
</dbReference>
<dbReference type="HAMAP" id="MF_00184">
    <property type="entry name" value="Thr_tRNA_synth"/>
    <property type="match status" value="1"/>
</dbReference>
<dbReference type="InterPro" id="IPR002314">
    <property type="entry name" value="aa-tRNA-synt_IIb"/>
</dbReference>
<dbReference type="InterPro" id="IPR006195">
    <property type="entry name" value="aa-tRNA-synth_II"/>
</dbReference>
<dbReference type="InterPro" id="IPR045864">
    <property type="entry name" value="aa-tRNA-synth_II/BPL/LPL"/>
</dbReference>
<dbReference type="InterPro" id="IPR004154">
    <property type="entry name" value="Anticodon-bd"/>
</dbReference>
<dbReference type="InterPro" id="IPR036621">
    <property type="entry name" value="Anticodon-bd_dom_sf"/>
</dbReference>
<dbReference type="InterPro" id="IPR012675">
    <property type="entry name" value="Beta-grasp_dom_sf"/>
</dbReference>
<dbReference type="InterPro" id="IPR004095">
    <property type="entry name" value="TGS"/>
</dbReference>
<dbReference type="InterPro" id="IPR012676">
    <property type="entry name" value="TGS-like"/>
</dbReference>
<dbReference type="InterPro" id="IPR002320">
    <property type="entry name" value="Thr-tRNA-ligase_IIa"/>
</dbReference>
<dbReference type="InterPro" id="IPR018163">
    <property type="entry name" value="Thr/Ala-tRNA-synth_IIc_edit"/>
</dbReference>
<dbReference type="InterPro" id="IPR047246">
    <property type="entry name" value="ThrRS_anticodon"/>
</dbReference>
<dbReference type="InterPro" id="IPR033728">
    <property type="entry name" value="ThrRS_core"/>
</dbReference>
<dbReference type="InterPro" id="IPR012947">
    <property type="entry name" value="tRNA_SAD"/>
</dbReference>
<dbReference type="NCBIfam" id="TIGR00418">
    <property type="entry name" value="thrS"/>
    <property type="match status" value="1"/>
</dbReference>
<dbReference type="PANTHER" id="PTHR11451:SF44">
    <property type="entry name" value="THREONINE--TRNA LIGASE, CHLOROPLASTIC_MITOCHONDRIAL 2"/>
    <property type="match status" value="1"/>
</dbReference>
<dbReference type="PANTHER" id="PTHR11451">
    <property type="entry name" value="THREONINE-TRNA LIGASE"/>
    <property type="match status" value="1"/>
</dbReference>
<dbReference type="Pfam" id="PF03129">
    <property type="entry name" value="HGTP_anticodon"/>
    <property type="match status" value="1"/>
</dbReference>
<dbReference type="Pfam" id="PF02824">
    <property type="entry name" value="TGS"/>
    <property type="match status" value="1"/>
</dbReference>
<dbReference type="Pfam" id="PF00587">
    <property type="entry name" value="tRNA-synt_2b"/>
    <property type="match status" value="1"/>
</dbReference>
<dbReference type="Pfam" id="PF07973">
    <property type="entry name" value="tRNA_SAD"/>
    <property type="match status" value="1"/>
</dbReference>
<dbReference type="PRINTS" id="PR01047">
    <property type="entry name" value="TRNASYNTHTHR"/>
</dbReference>
<dbReference type="SMART" id="SM00863">
    <property type="entry name" value="tRNA_SAD"/>
    <property type="match status" value="1"/>
</dbReference>
<dbReference type="SUPFAM" id="SSF52954">
    <property type="entry name" value="Class II aaRS ABD-related"/>
    <property type="match status" value="1"/>
</dbReference>
<dbReference type="SUPFAM" id="SSF55681">
    <property type="entry name" value="Class II aaRS and biotin synthetases"/>
    <property type="match status" value="1"/>
</dbReference>
<dbReference type="SUPFAM" id="SSF81271">
    <property type="entry name" value="TGS-like"/>
    <property type="match status" value="1"/>
</dbReference>
<dbReference type="SUPFAM" id="SSF55186">
    <property type="entry name" value="ThrRS/AlaRS common domain"/>
    <property type="match status" value="1"/>
</dbReference>
<dbReference type="PROSITE" id="PS50862">
    <property type="entry name" value="AA_TRNA_LIGASE_II"/>
    <property type="match status" value="1"/>
</dbReference>
<dbReference type="PROSITE" id="PS51880">
    <property type="entry name" value="TGS"/>
    <property type="match status" value="1"/>
</dbReference>
<name>SYT_PARD8</name>
<accession>A6L9S2</accession>
<reference key="1">
    <citation type="journal article" date="2007" name="PLoS Biol.">
        <title>Evolution of symbiotic bacteria in the distal human intestine.</title>
        <authorList>
            <person name="Xu J."/>
            <person name="Mahowald M.A."/>
            <person name="Ley R.E."/>
            <person name="Lozupone C.A."/>
            <person name="Hamady M."/>
            <person name="Martens E.C."/>
            <person name="Henrissat B."/>
            <person name="Coutinho P.M."/>
            <person name="Minx P."/>
            <person name="Latreille P."/>
            <person name="Cordum H."/>
            <person name="Van Brunt A."/>
            <person name="Kim K."/>
            <person name="Fulton R.S."/>
            <person name="Fulton L.A."/>
            <person name="Clifton S.W."/>
            <person name="Wilson R.K."/>
            <person name="Knight R.D."/>
            <person name="Gordon J.I."/>
        </authorList>
    </citation>
    <scope>NUCLEOTIDE SEQUENCE [LARGE SCALE GENOMIC DNA]</scope>
    <source>
        <strain>ATCC 8503 / DSM 20701 / CIP 104284 / JCM 5825 / NCTC 11152</strain>
    </source>
</reference>
<evidence type="ECO:0000255" key="1">
    <source>
        <dbReference type="HAMAP-Rule" id="MF_00184"/>
    </source>
</evidence>
<evidence type="ECO:0000255" key="2">
    <source>
        <dbReference type="PROSITE-ProRule" id="PRU01228"/>
    </source>
</evidence>
<organism>
    <name type="scientific">Parabacteroides distasonis (strain ATCC 8503 / DSM 20701 / CIP 104284 / JCM 5825 / NCTC 11152)</name>
    <dbReference type="NCBI Taxonomy" id="435591"/>
    <lineage>
        <taxon>Bacteria</taxon>
        <taxon>Pseudomonadati</taxon>
        <taxon>Bacteroidota</taxon>
        <taxon>Bacteroidia</taxon>
        <taxon>Bacteroidales</taxon>
        <taxon>Tannerellaceae</taxon>
        <taxon>Parabacteroides</taxon>
    </lineage>
</organism>
<feature type="chain" id="PRO_1000020455" description="Threonine--tRNA ligase">
    <location>
        <begin position="1"/>
        <end position="651"/>
    </location>
</feature>
<feature type="domain" description="TGS" evidence="2">
    <location>
        <begin position="1"/>
        <end position="61"/>
    </location>
</feature>
<feature type="region of interest" description="Catalytic" evidence="1">
    <location>
        <begin position="242"/>
        <end position="541"/>
    </location>
</feature>
<feature type="binding site" evidence="1">
    <location>
        <position position="337"/>
    </location>
    <ligand>
        <name>Zn(2+)</name>
        <dbReference type="ChEBI" id="CHEBI:29105"/>
    </ligand>
</feature>
<feature type="binding site" evidence="1">
    <location>
        <position position="388"/>
    </location>
    <ligand>
        <name>Zn(2+)</name>
        <dbReference type="ChEBI" id="CHEBI:29105"/>
    </ligand>
</feature>
<feature type="binding site" evidence="1">
    <location>
        <position position="518"/>
    </location>
    <ligand>
        <name>Zn(2+)</name>
        <dbReference type="ChEBI" id="CHEBI:29105"/>
    </ligand>
</feature>
<comment type="function">
    <text evidence="1">Catalyzes the attachment of threonine to tRNA(Thr) in a two-step reaction: L-threonine is first activated by ATP to form Thr-AMP and then transferred to the acceptor end of tRNA(Thr). Also edits incorrectly charged L-seryl-tRNA(Thr).</text>
</comment>
<comment type="catalytic activity">
    <reaction evidence="1">
        <text>tRNA(Thr) + L-threonine + ATP = L-threonyl-tRNA(Thr) + AMP + diphosphate + H(+)</text>
        <dbReference type="Rhea" id="RHEA:24624"/>
        <dbReference type="Rhea" id="RHEA-COMP:9670"/>
        <dbReference type="Rhea" id="RHEA-COMP:9704"/>
        <dbReference type="ChEBI" id="CHEBI:15378"/>
        <dbReference type="ChEBI" id="CHEBI:30616"/>
        <dbReference type="ChEBI" id="CHEBI:33019"/>
        <dbReference type="ChEBI" id="CHEBI:57926"/>
        <dbReference type="ChEBI" id="CHEBI:78442"/>
        <dbReference type="ChEBI" id="CHEBI:78534"/>
        <dbReference type="ChEBI" id="CHEBI:456215"/>
        <dbReference type="EC" id="6.1.1.3"/>
    </reaction>
</comment>
<comment type="cofactor">
    <cofactor evidence="1">
        <name>Zn(2+)</name>
        <dbReference type="ChEBI" id="CHEBI:29105"/>
    </cofactor>
    <text evidence="1">Binds 1 zinc ion per subunit.</text>
</comment>
<comment type="subunit">
    <text evidence="1">Homodimer.</text>
</comment>
<comment type="subcellular location">
    <subcellularLocation>
        <location evidence="1">Cytoplasm</location>
    </subcellularLocation>
</comment>
<comment type="similarity">
    <text evidence="1">Belongs to the class-II aminoacyl-tRNA synthetase family.</text>
</comment>
<sequence length="651" mass="74918">MIKITFPDNSVREYAKGTTAMQIAESISSRLAQEVLAASVNGEVWDLSRPINDDATVKLLKWEDEEGKHAFWHSSAHLMAEALQELYPGIKFGIGPAIENGFYYDVDPGEAVIKEGDFAAIEAKMLELVAKKEEIKRQDITKADAMKMFGDRGEEYKTELISELEDGTITTYTQGSFTDLCRGPHLPNTSYLKAVKILSVAGAYWRGDEKRKQLVRLYGITFPKKKMLDEYLTLLEEAKKRDHRKIGKEMDLFMFSDTVGKGLPMWLPKGTALRLRLQEFLRRIQARYNYQEVMCPPIGNKLLYITSGHYAKYGKDSFQPIHTPEEGEEYFLKPMNCPHHCMIYKNSPRSYKDLPLRLAEFGTVCRYEQSGELHGLTRVRSFTQDDAHIFCRPDQVKQEFLNVMDIISIVFKTMNFENFEAQISLRDKVNREKYIGSDENWEKAEQAIVEACEEKGLKAKIEYGEAAFYGPKLDFMVKDAIGRRWQLGTIQVDYNLPERFQLEYTGADNQKHRPVMIHRAPFGSMERFVAVLIEHTAGKFPLWLTPEQVCIMPISEKFNDYAWQIARELGNQEIRAIVDDRNEKIGRKIRDNELKRIPYMLIVGEKEAENSEVSVRKQGEGDKGSMKIATFAALLNGEVEEMMNRWQKSND</sequence>
<gene>
    <name evidence="1" type="primary">thrS</name>
    <name type="ordered locus">BDI_0660</name>
</gene>
<keyword id="KW-0030">Aminoacyl-tRNA synthetase</keyword>
<keyword id="KW-0067">ATP-binding</keyword>
<keyword id="KW-0963">Cytoplasm</keyword>
<keyword id="KW-0436">Ligase</keyword>
<keyword id="KW-0479">Metal-binding</keyword>
<keyword id="KW-0547">Nucleotide-binding</keyword>
<keyword id="KW-0648">Protein biosynthesis</keyword>
<keyword id="KW-1185">Reference proteome</keyword>
<keyword id="KW-0694">RNA-binding</keyword>
<keyword id="KW-0820">tRNA-binding</keyword>
<keyword id="KW-0862">Zinc</keyword>
<protein>
    <recommendedName>
        <fullName evidence="1">Threonine--tRNA ligase</fullName>
        <ecNumber evidence="1">6.1.1.3</ecNumber>
    </recommendedName>
    <alternativeName>
        <fullName evidence="1">Threonyl-tRNA synthetase</fullName>
        <shortName evidence="1">ThrRS</shortName>
    </alternativeName>
</protein>